<accession>Q9M1X5</accession>
<sequence length="154" mass="17234">MSKMVMLLSSDGESFQVEEAVAVQSQTIAHMIEDDCVANGVPIANVTGVILSKVIEYCKKHVVSDSPTEESKDELKKWDAEFMKALEQSSTLFDVMLAANYLNIKDLLDLGCQTVADMITGKKPDEIRALLGIENDFTPEEEEEIRKENQWAFE</sequence>
<name>ASK13_ARATH</name>
<evidence type="ECO:0000250" key="1"/>
<evidence type="ECO:0000269" key="2">
    <source>
    </source>
</evidence>
<evidence type="ECO:0000269" key="3">
    <source>
    </source>
</evidence>
<evidence type="ECO:0000269" key="4">
    <source>
    </source>
</evidence>
<evidence type="ECO:0000269" key="5">
    <source>
    </source>
</evidence>
<evidence type="ECO:0000305" key="6"/>
<feature type="chain" id="PRO_0000375254" description="SKP1-like protein 13">
    <location>
        <begin position="1"/>
        <end position="154"/>
    </location>
</feature>
<feature type="region of interest" description="Interaction with the F-box domain of F-box proteins" evidence="1">
    <location>
        <begin position="96"/>
        <end position="154"/>
    </location>
</feature>
<reference key="1">
    <citation type="journal article" date="2000" name="Nature">
        <title>Sequence and analysis of chromosome 3 of the plant Arabidopsis thaliana.</title>
        <authorList>
            <person name="Salanoubat M."/>
            <person name="Lemcke K."/>
            <person name="Rieger M."/>
            <person name="Ansorge W."/>
            <person name="Unseld M."/>
            <person name="Fartmann B."/>
            <person name="Valle G."/>
            <person name="Bloecker H."/>
            <person name="Perez-Alonso M."/>
            <person name="Obermaier B."/>
            <person name="Delseny M."/>
            <person name="Boutry M."/>
            <person name="Grivell L.A."/>
            <person name="Mache R."/>
            <person name="Puigdomenech P."/>
            <person name="De Simone V."/>
            <person name="Choisne N."/>
            <person name="Artiguenave F."/>
            <person name="Robert C."/>
            <person name="Brottier P."/>
            <person name="Wincker P."/>
            <person name="Cattolico L."/>
            <person name="Weissenbach J."/>
            <person name="Saurin W."/>
            <person name="Quetier F."/>
            <person name="Schaefer M."/>
            <person name="Mueller-Auer S."/>
            <person name="Gabel C."/>
            <person name="Fuchs M."/>
            <person name="Benes V."/>
            <person name="Wurmbach E."/>
            <person name="Drzonek H."/>
            <person name="Erfle H."/>
            <person name="Jordan N."/>
            <person name="Bangert S."/>
            <person name="Wiedelmann R."/>
            <person name="Kranz H."/>
            <person name="Voss H."/>
            <person name="Holland R."/>
            <person name="Brandt P."/>
            <person name="Nyakatura G."/>
            <person name="Vezzi A."/>
            <person name="D'Angelo M."/>
            <person name="Pallavicini A."/>
            <person name="Toppo S."/>
            <person name="Simionati B."/>
            <person name="Conrad A."/>
            <person name="Hornischer K."/>
            <person name="Kauer G."/>
            <person name="Loehnert T.-H."/>
            <person name="Nordsiek G."/>
            <person name="Reichelt J."/>
            <person name="Scharfe M."/>
            <person name="Schoen O."/>
            <person name="Bargues M."/>
            <person name="Terol J."/>
            <person name="Climent J."/>
            <person name="Navarro P."/>
            <person name="Collado C."/>
            <person name="Perez-Perez A."/>
            <person name="Ottenwaelder B."/>
            <person name="Duchemin D."/>
            <person name="Cooke R."/>
            <person name="Laudie M."/>
            <person name="Berger-Llauro C."/>
            <person name="Purnelle B."/>
            <person name="Masuy D."/>
            <person name="de Haan M."/>
            <person name="Maarse A.C."/>
            <person name="Alcaraz J.-P."/>
            <person name="Cottet A."/>
            <person name="Casacuberta E."/>
            <person name="Monfort A."/>
            <person name="Argiriou A."/>
            <person name="Flores M."/>
            <person name="Liguori R."/>
            <person name="Vitale D."/>
            <person name="Mannhaupt G."/>
            <person name="Haase D."/>
            <person name="Schoof H."/>
            <person name="Rudd S."/>
            <person name="Zaccaria P."/>
            <person name="Mewes H.-W."/>
            <person name="Mayer K.F.X."/>
            <person name="Kaul S."/>
            <person name="Town C.D."/>
            <person name="Koo H.L."/>
            <person name="Tallon L.J."/>
            <person name="Jenkins J."/>
            <person name="Rooney T."/>
            <person name="Rizzo M."/>
            <person name="Walts A."/>
            <person name="Utterback T."/>
            <person name="Fujii C.Y."/>
            <person name="Shea T.P."/>
            <person name="Creasy T.H."/>
            <person name="Haas B."/>
            <person name="Maiti R."/>
            <person name="Wu D."/>
            <person name="Peterson J."/>
            <person name="Van Aken S."/>
            <person name="Pai G."/>
            <person name="Militscher J."/>
            <person name="Sellers P."/>
            <person name="Gill J.E."/>
            <person name="Feldblyum T.V."/>
            <person name="Preuss D."/>
            <person name="Lin X."/>
            <person name="Nierman W.C."/>
            <person name="Salzberg S.L."/>
            <person name="White O."/>
            <person name="Venter J.C."/>
            <person name="Fraser C.M."/>
            <person name="Kaneko T."/>
            <person name="Nakamura Y."/>
            <person name="Sato S."/>
            <person name="Kato T."/>
            <person name="Asamizu E."/>
            <person name="Sasamoto S."/>
            <person name="Kimura T."/>
            <person name="Idesawa K."/>
            <person name="Kawashima K."/>
            <person name="Kishida Y."/>
            <person name="Kiyokawa C."/>
            <person name="Kohara M."/>
            <person name="Matsumoto M."/>
            <person name="Matsuno A."/>
            <person name="Muraki A."/>
            <person name="Nakayama S."/>
            <person name="Nakazaki N."/>
            <person name="Shinpo S."/>
            <person name="Takeuchi C."/>
            <person name="Wada T."/>
            <person name="Watanabe A."/>
            <person name="Yamada M."/>
            <person name="Yasuda M."/>
            <person name="Tabata S."/>
        </authorList>
    </citation>
    <scope>NUCLEOTIDE SEQUENCE [LARGE SCALE GENOMIC DNA]</scope>
    <source>
        <strain>cv. Columbia</strain>
    </source>
</reference>
<reference key="2">
    <citation type="journal article" date="2017" name="Plant J.">
        <title>Araport11: a complete reannotation of the Arabidopsis thaliana reference genome.</title>
        <authorList>
            <person name="Cheng C.Y."/>
            <person name="Krishnakumar V."/>
            <person name="Chan A.P."/>
            <person name="Thibaud-Nissen F."/>
            <person name="Schobel S."/>
            <person name="Town C.D."/>
        </authorList>
    </citation>
    <scope>GENOME REANNOTATION</scope>
    <source>
        <strain>cv. Columbia</strain>
    </source>
</reference>
<reference key="3">
    <citation type="journal article" date="2002" name="Proc. Natl. Acad. Sci. U.S.A.">
        <title>The F-box subunit of the SCF E3 complex is encoded by a diverse superfamily of genes in Arabidopsis.</title>
        <authorList>
            <person name="Gagne J.M."/>
            <person name="Downes B.P."/>
            <person name="Shiu S.-H."/>
            <person name="Durski A.M."/>
            <person name="Vierstra R.D."/>
        </authorList>
    </citation>
    <scope>INTERACTION WITH AT3G04660; PP2A13; AT1G67340; AT4G38940; SKIP15; AT1G78100; AT1G55000; SKIP16 AND EBF1</scope>
</reference>
<reference key="4">
    <citation type="journal article" date="2003" name="Plant Physiol.">
        <title>Members of the Arabidopsis-SKP1-like gene family exhibit a variety of expression patterns and may play diverse roles in Arabidopsis.</title>
        <authorList>
            <person name="Zhao D."/>
            <person name="Ni W."/>
            <person name="Feng B."/>
            <person name="Han T."/>
            <person name="Petrasek M.G."/>
            <person name="Ma H."/>
        </authorList>
    </citation>
    <scope>GENE FAMILY</scope>
    <scope>NOMENCLATURE</scope>
    <scope>TISSUE SPECIFICITY</scope>
</reference>
<reference key="5">
    <citation type="journal article" date="2004" name="Plant Cell Physiol.">
        <title>Expression and interaction analysis of Arabidopsis Skp1-related genes.</title>
        <authorList>
            <person name="Takahashi N."/>
            <person name="Kuroda H."/>
            <person name="Kuromori T."/>
            <person name="Hirayama T."/>
            <person name="Seki M."/>
            <person name="Shinozaki K."/>
            <person name="Shimada H."/>
            <person name="Matsui M."/>
        </authorList>
    </citation>
    <scope>TISSUE SPECIFICITY</scope>
    <scope>INTERACTION WITH ADO3/FKF1; AT4G39550; AT3G61590 AND AT5G49610</scope>
</reference>
<reference key="6">
    <citation type="journal article" date="2009" name="Plant J.">
        <title>An F-box gene, CPR30, functions as a negative regulator of the defense response in Arabidopsis.</title>
        <authorList>
            <person name="Gou M."/>
            <person name="Su N."/>
            <person name="Zheng J."/>
            <person name="Huai J."/>
            <person name="Wu G."/>
            <person name="Zhao J."/>
            <person name="He J."/>
            <person name="Tang D."/>
            <person name="Yang S."/>
            <person name="Wang G."/>
        </authorList>
    </citation>
    <scope>INTERACTION WITH CPR1/CPR30</scope>
</reference>
<keyword id="KW-0539">Nucleus</keyword>
<keyword id="KW-1185">Reference proteome</keyword>
<keyword id="KW-0833">Ubl conjugation pathway</keyword>
<protein>
    <recommendedName>
        <fullName>SKP1-like protein 13</fullName>
        <shortName>AtSK13</shortName>
    </recommendedName>
</protein>
<dbReference type="EMBL" id="AL138647">
    <property type="protein sequence ID" value="CAB75820.1"/>
    <property type="molecule type" value="Genomic_DNA"/>
</dbReference>
<dbReference type="EMBL" id="CP002686">
    <property type="protein sequence ID" value="AEE80002.1"/>
    <property type="molecule type" value="Genomic_DNA"/>
</dbReference>
<dbReference type="PIR" id="T47825">
    <property type="entry name" value="T47825"/>
</dbReference>
<dbReference type="RefSeq" id="NP_567090.1">
    <property type="nucleotide sequence ID" value="NM_115864.2"/>
</dbReference>
<dbReference type="SMR" id="Q9M1X5"/>
<dbReference type="BioGRID" id="10485">
    <property type="interactions" value="82"/>
</dbReference>
<dbReference type="ComplexPortal" id="CPX-1440">
    <property type="entry name" value="SCF(COI1) ubiquitin ligase complex, variant CUL1-RBX1A-ASK13"/>
</dbReference>
<dbReference type="ComplexPortal" id="CPX-1461">
    <property type="entry name" value="SCF(COI1) ubiquitin ligase complex, variant CUL1-RBX1B-ASK13"/>
</dbReference>
<dbReference type="ComplexPortal" id="CPX-1483">
    <property type="entry name" value="SCF(COI1) ubiquitin ligase complex, variant CUL2-RBX1A-ASK13"/>
</dbReference>
<dbReference type="ComplexPortal" id="CPX-1506">
    <property type="entry name" value="SCF(COI1) ubiquitin ligase complex, variant CUL2-RBX1B-ASK13"/>
</dbReference>
<dbReference type="ComplexPortal" id="CPX-1526">
    <property type="entry name" value="SCF(TIR1) ubiquitin ligase complex, variant CUL1-RBX1A-ASK13"/>
</dbReference>
<dbReference type="ComplexPortal" id="CPX-1547">
    <property type="entry name" value="SCF(TIR1) ubiquitin ligase complex, variant CUL1-RBX1B-ASK13"/>
</dbReference>
<dbReference type="ComplexPortal" id="CPX-1569">
    <property type="entry name" value="SCF(TIR1) ubiquitin ligase complex, variant CUL2-RBX1A-ASK13"/>
</dbReference>
<dbReference type="ComplexPortal" id="CPX-1590">
    <property type="entry name" value="SCF(TIR1) ubiquitin ligase complex, variant CUL2-RBX1B-ASK13"/>
</dbReference>
<dbReference type="DIP" id="DIP-31331N"/>
<dbReference type="FunCoup" id="Q9M1X5">
    <property type="interactions" value="2550"/>
</dbReference>
<dbReference type="IntAct" id="Q9M1X5">
    <property type="interactions" value="26"/>
</dbReference>
<dbReference type="STRING" id="3702.Q9M1X5"/>
<dbReference type="PaxDb" id="3702-AT3G60010.1"/>
<dbReference type="ProteomicsDB" id="246504"/>
<dbReference type="EnsemblPlants" id="AT3G60010.1">
    <property type="protein sequence ID" value="AT3G60010.1"/>
    <property type="gene ID" value="AT3G60010"/>
</dbReference>
<dbReference type="GeneID" id="825171"/>
<dbReference type="Gramene" id="AT3G60010.1">
    <property type="protein sequence ID" value="AT3G60010.1"/>
    <property type="gene ID" value="AT3G60010"/>
</dbReference>
<dbReference type="KEGG" id="ath:AT3G60010"/>
<dbReference type="Araport" id="AT3G60010"/>
<dbReference type="TAIR" id="AT3G60010">
    <property type="gene designation" value="SK13"/>
</dbReference>
<dbReference type="eggNOG" id="KOG1724">
    <property type="taxonomic scope" value="Eukaryota"/>
</dbReference>
<dbReference type="HOGENOM" id="CLU_059252_6_1_1"/>
<dbReference type="InParanoid" id="Q9M1X5"/>
<dbReference type="OMA" id="SPKMITL"/>
<dbReference type="OrthoDB" id="7827685at2759"/>
<dbReference type="PhylomeDB" id="Q9M1X5"/>
<dbReference type="UniPathway" id="UPA00143"/>
<dbReference type="PRO" id="PR:Q9M1X5"/>
<dbReference type="Proteomes" id="UP000006548">
    <property type="component" value="Chromosome 3"/>
</dbReference>
<dbReference type="ExpressionAtlas" id="Q9M1X5">
    <property type="expression patterns" value="baseline and differential"/>
</dbReference>
<dbReference type="GO" id="GO:0005634">
    <property type="term" value="C:nucleus"/>
    <property type="evidence" value="ECO:0007669"/>
    <property type="project" value="UniProtKB-SubCell"/>
</dbReference>
<dbReference type="GO" id="GO:0019005">
    <property type="term" value="C:SCF ubiquitin ligase complex"/>
    <property type="evidence" value="ECO:0000250"/>
    <property type="project" value="ComplexPortal"/>
</dbReference>
<dbReference type="GO" id="GO:0009734">
    <property type="term" value="P:auxin-activated signaling pathway"/>
    <property type="evidence" value="ECO:0000303"/>
    <property type="project" value="ComplexPortal"/>
</dbReference>
<dbReference type="GO" id="GO:0009867">
    <property type="term" value="P:jasmonic acid mediated signaling pathway"/>
    <property type="evidence" value="ECO:0000315"/>
    <property type="project" value="ComplexPortal"/>
</dbReference>
<dbReference type="GO" id="GO:0016567">
    <property type="term" value="P:protein ubiquitination"/>
    <property type="evidence" value="ECO:0007669"/>
    <property type="project" value="UniProtKB-UniPathway"/>
</dbReference>
<dbReference type="GO" id="GO:0009733">
    <property type="term" value="P:response to auxin"/>
    <property type="evidence" value="ECO:0000303"/>
    <property type="project" value="ComplexPortal"/>
</dbReference>
<dbReference type="GO" id="GO:0009753">
    <property type="term" value="P:response to jasmonic acid"/>
    <property type="evidence" value="ECO:0000315"/>
    <property type="project" value="ComplexPortal"/>
</dbReference>
<dbReference type="GO" id="GO:0006511">
    <property type="term" value="P:ubiquitin-dependent protein catabolic process"/>
    <property type="evidence" value="ECO:0007669"/>
    <property type="project" value="InterPro"/>
</dbReference>
<dbReference type="CDD" id="cd18322">
    <property type="entry name" value="BTB_POZ_SKP1"/>
    <property type="match status" value="1"/>
</dbReference>
<dbReference type="FunFam" id="3.30.710.10:FF:000170">
    <property type="entry name" value="SKP1-like protein 5"/>
    <property type="match status" value="1"/>
</dbReference>
<dbReference type="Gene3D" id="3.30.710.10">
    <property type="entry name" value="Potassium Channel Kv1.1, Chain A"/>
    <property type="match status" value="1"/>
</dbReference>
<dbReference type="InterPro" id="IPR016897">
    <property type="entry name" value="SKP1"/>
</dbReference>
<dbReference type="InterPro" id="IPR001232">
    <property type="entry name" value="SKP1-like"/>
</dbReference>
<dbReference type="InterPro" id="IPR036296">
    <property type="entry name" value="SKP1-like_dim_sf"/>
</dbReference>
<dbReference type="InterPro" id="IPR011333">
    <property type="entry name" value="SKP1/BTB/POZ_sf"/>
</dbReference>
<dbReference type="InterPro" id="IPR016072">
    <property type="entry name" value="Skp1_comp_dimer"/>
</dbReference>
<dbReference type="InterPro" id="IPR016073">
    <property type="entry name" value="Skp1_comp_POZ"/>
</dbReference>
<dbReference type="PANTHER" id="PTHR11165">
    <property type="entry name" value="SKP1"/>
    <property type="match status" value="1"/>
</dbReference>
<dbReference type="Pfam" id="PF01466">
    <property type="entry name" value="Skp1"/>
    <property type="match status" value="1"/>
</dbReference>
<dbReference type="Pfam" id="PF03931">
    <property type="entry name" value="Skp1_POZ"/>
    <property type="match status" value="1"/>
</dbReference>
<dbReference type="PIRSF" id="PIRSF028729">
    <property type="entry name" value="E3_ubiquit_lig_SCF_Skp"/>
    <property type="match status" value="1"/>
</dbReference>
<dbReference type="SMART" id="SM00512">
    <property type="entry name" value="Skp1"/>
    <property type="match status" value="1"/>
</dbReference>
<dbReference type="SUPFAM" id="SSF54695">
    <property type="entry name" value="POZ domain"/>
    <property type="match status" value="1"/>
</dbReference>
<dbReference type="SUPFAM" id="SSF81382">
    <property type="entry name" value="Skp1 dimerisation domain-like"/>
    <property type="match status" value="1"/>
</dbReference>
<proteinExistence type="evidence at protein level"/>
<comment type="function">
    <text evidence="1">Involved in ubiquitination and subsequent proteasomal degradation of target proteins. Together with CUL1, RBX1 and a F-box protein, it forms a SCF E3 ubiquitin ligase complex. The functional specificity of this complex depends on the type of F-box protein. In the SCF complex, it serves as an adapter that links the F-box protein to CUL1 (By similarity).</text>
</comment>
<comment type="pathway">
    <text>Protein modification; protein ubiquitination.</text>
</comment>
<comment type="subunit">
    <text evidence="1 2 4 5">Part of a SCF (SKP1-cullin-F-box) protein ligase complex (By similarity). Interacts with ADO3/FKF1, EBF1, PP2A13, SKIP15, SKIP16, CPR1/CPR30, At1g55000, At3g61590, At1g67340, At1g78100, At3g04660, At4g38940, At4g39550 and At5g49610.</text>
</comment>
<comment type="subcellular location">
    <subcellularLocation>
        <location evidence="1">Nucleus</location>
    </subcellularLocation>
</comment>
<comment type="tissue specificity">
    <text evidence="3 4">Mostly expressed in inflorescences, and, to a lower extent, in seedlings and siliques. Also detected in cotyledons, leaves, pollen and seeds.</text>
</comment>
<comment type="similarity">
    <text evidence="6">Belongs to the SKP1 family.</text>
</comment>
<gene>
    <name type="primary">ASK13</name>
    <name type="ordered locus">At3g60010</name>
    <name type="ORF">F24G16.280</name>
    <name type="ORF">T2O9.1</name>
</gene>
<organism>
    <name type="scientific">Arabidopsis thaliana</name>
    <name type="common">Mouse-ear cress</name>
    <dbReference type="NCBI Taxonomy" id="3702"/>
    <lineage>
        <taxon>Eukaryota</taxon>
        <taxon>Viridiplantae</taxon>
        <taxon>Streptophyta</taxon>
        <taxon>Embryophyta</taxon>
        <taxon>Tracheophyta</taxon>
        <taxon>Spermatophyta</taxon>
        <taxon>Magnoliopsida</taxon>
        <taxon>eudicotyledons</taxon>
        <taxon>Gunneridae</taxon>
        <taxon>Pentapetalae</taxon>
        <taxon>rosids</taxon>
        <taxon>malvids</taxon>
        <taxon>Brassicales</taxon>
        <taxon>Brassicaceae</taxon>
        <taxon>Camelineae</taxon>
        <taxon>Arabidopsis</taxon>
    </lineage>
</organism>